<dbReference type="EMBL" id="CP001661">
    <property type="protein sequence ID" value="ACT19346.1"/>
    <property type="molecule type" value="Genomic_DNA"/>
</dbReference>
<dbReference type="SMR" id="C6E4Q0"/>
<dbReference type="STRING" id="443144.GM21_3321"/>
<dbReference type="KEGG" id="gem:GM21_3321"/>
<dbReference type="eggNOG" id="COG0197">
    <property type="taxonomic scope" value="Bacteria"/>
</dbReference>
<dbReference type="HOGENOM" id="CLU_078858_2_1_7"/>
<dbReference type="OrthoDB" id="9802589at2"/>
<dbReference type="GO" id="GO:0022625">
    <property type="term" value="C:cytosolic large ribosomal subunit"/>
    <property type="evidence" value="ECO:0007669"/>
    <property type="project" value="TreeGrafter"/>
</dbReference>
<dbReference type="GO" id="GO:0019843">
    <property type="term" value="F:rRNA binding"/>
    <property type="evidence" value="ECO:0007669"/>
    <property type="project" value="UniProtKB-UniRule"/>
</dbReference>
<dbReference type="GO" id="GO:0003735">
    <property type="term" value="F:structural constituent of ribosome"/>
    <property type="evidence" value="ECO:0007669"/>
    <property type="project" value="InterPro"/>
</dbReference>
<dbReference type="GO" id="GO:0000049">
    <property type="term" value="F:tRNA binding"/>
    <property type="evidence" value="ECO:0007669"/>
    <property type="project" value="UniProtKB-KW"/>
</dbReference>
<dbReference type="GO" id="GO:0006412">
    <property type="term" value="P:translation"/>
    <property type="evidence" value="ECO:0007669"/>
    <property type="project" value="UniProtKB-UniRule"/>
</dbReference>
<dbReference type="CDD" id="cd01433">
    <property type="entry name" value="Ribosomal_L16_L10e"/>
    <property type="match status" value="1"/>
</dbReference>
<dbReference type="FunFam" id="3.90.1170.10:FF:000001">
    <property type="entry name" value="50S ribosomal protein L16"/>
    <property type="match status" value="1"/>
</dbReference>
<dbReference type="Gene3D" id="3.90.1170.10">
    <property type="entry name" value="Ribosomal protein L10e/L16"/>
    <property type="match status" value="1"/>
</dbReference>
<dbReference type="HAMAP" id="MF_01342">
    <property type="entry name" value="Ribosomal_uL16"/>
    <property type="match status" value="1"/>
</dbReference>
<dbReference type="InterPro" id="IPR047873">
    <property type="entry name" value="Ribosomal_uL16"/>
</dbReference>
<dbReference type="InterPro" id="IPR000114">
    <property type="entry name" value="Ribosomal_uL16_bact-type"/>
</dbReference>
<dbReference type="InterPro" id="IPR020798">
    <property type="entry name" value="Ribosomal_uL16_CS"/>
</dbReference>
<dbReference type="InterPro" id="IPR016180">
    <property type="entry name" value="Ribosomal_uL16_dom"/>
</dbReference>
<dbReference type="InterPro" id="IPR036920">
    <property type="entry name" value="Ribosomal_uL16_sf"/>
</dbReference>
<dbReference type="NCBIfam" id="TIGR01164">
    <property type="entry name" value="rplP_bact"/>
    <property type="match status" value="1"/>
</dbReference>
<dbReference type="PANTHER" id="PTHR12220">
    <property type="entry name" value="50S/60S RIBOSOMAL PROTEIN L16"/>
    <property type="match status" value="1"/>
</dbReference>
<dbReference type="PANTHER" id="PTHR12220:SF13">
    <property type="entry name" value="LARGE RIBOSOMAL SUBUNIT PROTEIN UL16M"/>
    <property type="match status" value="1"/>
</dbReference>
<dbReference type="Pfam" id="PF00252">
    <property type="entry name" value="Ribosomal_L16"/>
    <property type="match status" value="1"/>
</dbReference>
<dbReference type="PRINTS" id="PR00060">
    <property type="entry name" value="RIBOSOMALL16"/>
</dbReference>
<dbReference type="SUPFAM" id="SSF54686">
    <property type="entry name" value="Ribosomal protein L16p/L10e"/>
    <property type="match status" value="1"/>
</dbReference>
<dbReference type="PROSITE" id="PS00586">
    <property type="entry name" value="RIBOSOMAL_L16_1"/>
    <property type="match status" value="1"/>
</dbReference>
<dbReference type="PROSITE" id="PS00701">
    <property type="entry name" value="RIBOSOMAL_L16_2"/>
    <property type="match status" value="1"/>
</dbReference>
<reference key="1">
    <citation type="submission" date="2009-07" db="EMBL/GenBank/DDBJ databases">
        <title>Complete sequence of Geobacter sp. M21.</title>
        <authorList>
            <consortium name="US DOE Joint Genome Institute"/>
            <person name="Lucas S."/>
            <person name="Copeland A."/>
            <person name="Lapidus A."/>
            <person name="Glavina del Rio T."/>
            <person name="Dalin E."/>
            <person name="Tice H."/>
            <person name="Bruce D."/>
            <person name="Goodwin L."/>
            <person name="Pitluck S."/>
            <person name="Saunders E."/>
            <person name="Brettin T."/>
            <person name="Detter J.C."/>
            <person name="Han C."/>
            <person name="Larimer F."/>
            <person name="Land M."/>
            <person name="Hauser L."/>
            <person name="Kyrpides N."/>
            <person name="Ovchinnikova G."/>
            <person name="Lovley D."/>
        </authorList>
    </citation>
    <scope>NUCLEOTIDE SEQUENCE [LARGE SCALE GENOMIC DNA]</scope>
    <source>
        <strain>M21</strain>
    </source>
</reference>
<feature type="chain" id="PRO_1000214734" description="Large ribosomal subunit protein uL16">
    <location>
        <begin position="1"/>
        <end position="140"/>
    </location>
</feature>
<comment type="function">
    <text evidence="1">Binds 23S rRNA and is also seen to make contacts with the A and possibly P site tRNAs.</text>
</comment>
<comment type="subunit">
    <text evidence="1">Part of the 50S ribosomal subunit.</text>
</comment>
<comment type="similarity">
    <text evidence="1">Belongs to the universal ribosomal protein uL16 family.</text>
</comment>
<sequence>MLMPKKVKYRKQMKGRMTGTPQRGVELAFGDFGLQATECGWLDSRQIEAARIAMTRYIKRGGKIWIRIFPDKPLTSKPAETRMGKGKGSPDSWVCVIKPGRILYEMEGVTEEVAREAFRLAAHKLPVASKFITRTEINEG</sequence>
<keyword id="KW-0687">Ribonucleoprotein</keyword>
<keyword id="KW-0689">Ribosomal protein</keyword>
<keyword id="KW-0694">RNA-binding</keyword>
<keyword id="KW-0699">rRNA-binding</keyword>
<keyword id="KW-0820">tRNA-binding</keyword>
<accession>C6E4Q0</accession>
<organism>
    <name type="scientific">Geobacter sp. (strain M21)</name>
    <dbReference type="NCBI Taxonomy" id="443144"/>
    <lineage>
        <taxon>Bacteria</taxon>
        <taxon>Pseudomonadati</taxon>
        <taxon>Thermodesulfobacteriota</taxon>
        <taxon>Desulfuromonadia</taxon>
        <taxon>Geobacterales</taxon>
        <taxon>Geobacteraceae</taxon>
        <taxon>Geobacter</taxon>
    </lineage>
</organism>
<protein>
    <recommendedName>
        <fullName evidence="1">Large ribosomal subunit protein uL16</fullName>
    </recommendedName>
    <alternativeName>
        <fullName evidence="2">50S ribosomal protein L16</fullName>
    </alternativeName>
</protein>
<evidence type="ECO:0000255" key="1">
    <source>
        <dbReference type="HAMAP-Rule" id="MF_01342"/>
    </source>
</evidence>
<evidence type="ECO:0000305" key="2"/>
<name>RL16_GEOSM</name>
<gene>
    <name evidence="1" type="primary">rplP</name>
    <name type="ordered locus">GM21_3321</name>
</gene>
<proteinExistence type="inferred from homology"/>